<proteinExistence type="inferred from homology"/>
<gene>
    <name type="ORF">GH17809</name>
</gene>
<reference evidence="4" key="1">
    <citation type="journal article" date="2007" name="Nature">
        <title>Evolution of genes and genomes on the Drosophila phylogeny.</title>
        <authorList>
            <consortium name="Drosophila 12 genomes consortium"/>
        </authorList>
    </citation>
    <scope>NUCLEOTIDE SEQUENCE [LARGE SCALE GENOMIC DNA]</scope>
    <source>
        <strain evidence="4">Tucson 15287-2541.00</strain>
    </source>
</reference>
<feature type="transit peptide" description="Mitochondrion" evidence="2">
    <location>
        <begin position="1"/>
        <end status="unknown"/>
    </location>
</feature>
<feature type="chain" id="PRO_0000388697" description="NFU1 iron-sulfur cluster scaffold homolog, mitochondrial" evidence="2">
    <location>
        <begin status="unknown"/>
        <end position="298"/>
    </location>
</feature>
<feature type="region of interest" description="NifU" evidence="2">
    <location>
        <begin position="194"/>
        <end position="262"/>
    </location>
</feature>
<feature type="binding site" evidence="1">
    <location>
        <position position="231"/>
    </location>
    <ligand>
        <name>[4Fe-4S] cluster</name>
        <dbReference type="ChEBI" id="CHEBI:49883"/>
        <note>ligand shared between dimeric partners</note>
    </ligand>
</feature>
<feature type="binding site" evidence="1">
    <location>
        <position position="234"/>
    </location>
    <ligand>
        <name>[4Fe-4S] cluster</name>
        <dbReference type="ChEBI" id="CHEBI:49883"/>
        <note>ligand shared between dimeric partners</note>
    </ligand>
</feature>
<organism>
    <name type="scientific">Drosophila grimshawi</name>
    <name type="common">Hawaiian fruit fly</name>
    <name type="synonym">Idiomyia grimshawi</name>
    <dbReference type="NCBI Taxonomy" id="7222"/>
    <lineage>
        <taxon>Eukaryota</taxon>
        <taxon>Metazoa</taxon>
        <taxon>Ecdysozoa</taxon>
        <taxon>Arthropoda</taxon>
        <taxon>Hexapoda</taxon>
        <taxon>Insecta</taxon>
        <taxon>Pterygota</taxon>
        <taxon>Neoptera</taxon>
        <taxon>Endopterygota</taxon>
        <taxon>Diptera</taxon>
        <taxon>Brachycera</taxon>
        <taxon>Muscomorpha</taxon>
        <taxon>Ephydroidea</taxon>
        <taxon>Drosophilidae</taxon>
        <taxon>Drosophila</taxon>
        <taxon>Hawaiian Drosophila</taxon>
    </lineage>
</organism>
<name>NFU1_DROGR</name>
<protein>
    <recommendedName>
        <fullName evidence="1">NFU1 iron-sulfur cluster scaffold homolog, mitochondrial</fullName>
    </recommendedName>
</protein>
<keyword id="KW-0408">Iron</keyword>
<keyword id="KW-0411">Iron-sulfur</keyword>
<keyword id="KW-0479">Metal-binding</keyword>
<keyword id="KW-0496">Mitochondrion</keyword>
<keyword id="KW-1185">Reference proteome</keyword>
<keyword id="KW-0809">Transit peptide</keyword>
<sequence>MSKLISYAAKSPLRNIRLGATQIICQHASTDCMHMAASASASSSARKTYSTLAVDLTKQQMLLRKPLETLALQITKRSMFIQTQDTPNPDSLKFLPGVEVLGKGNTYDFPSATAAHCSPLAKLLFRVEGVRAVFFGSDFITISKEENGEWGLIKPEVFAVIMDFFASGLPILHEARPNADTEILEDDDETVMMIKELLDTRIRPTVQEDGGDIVFISYEKGVVKLKMQGSCSSCPSSIVTLKNGVQNMLQFYIPEVESVEQVFDEVDKVANSEFERFEKSLKQKDSANPPVSIGGTQN</sequence>
<accession>B4JWR9</accession>
<evidence type="ECO:0000250" key="1">
    <source>
        <dbReference type="UniProtKB" id="Q9UMS0"/>
    </source>
</evidence>
<evidence type="ECO:0000255" key="2"/>
<evidence type="ECO:0000305" key="3"/>
<evidence type="ECO:0000312" key="4">
    <source>
        <dbReference type="EMBL" id="EDV95195.1"/>
    </source>
</evidence>
<comment type="function">
    <text evidence="1">Molecular scaffold for [Fe-S] cluster assembly of mitochondrial iron-sulfur proteins.</text>
</comment>
<comment type="subcellular location">
    <subcellularLocation>
        <location evidence="2">Mitochondrion</location>
    </subcellularLocation>
</comment>
<comment type="similarity">
    <text evidence="3">Belongs to the NifU family.</text>
</comment>
<dbReference type="EMBL" id="CH916376">
    <property type="protein sequence ID" value="EDV95195.1"/>
    <property type="molecule type" value="Genomic_DNA"/>
</dbReference>
<dbReference type="SMR" id="B4JWR9"/>
<dbReference type="FunCoup" id="B4JWR9">
    <property type="interactions" value="1037"/>
</dbReference>
<dbReference type="STRING" id="7222.B4JWR9"/>
<dbReference type="EnsemblMetazoa" id="FBtr0153223">
    <property type="protein sequence ID" value="FBpp0151715"/>
    <property type="gene ID" value="FBgn0125279"/>
</dbReference>
<dbReference type="EnsemblMetazoa" id="XM_001995507.3">
    <property type="protein sequence ID" value="XP_001995543.1"/>
    <property type="gene ID" value="LOC6569279"/>
</dbReference>
<dbReference type="GeneID" id="6569279"/>
<dbReference type="KEGG" id="dgr:6569279"/>
<dbReference type="eggNOG" id="KOG2358">
    <property type="taxonomic scope" value="Eukaryota"/>
</dbReference>
<dbReference type="HOGENOM" id="CLU_060555_0_2_1"/>
<dbReference type="InParanoid" id="B4JWR9"/>
<dbReference type="OMA" id="AIMEHYM"/>
<dbReference type="OrthoDB" id="565552at2759"/>
<dbReference type="PhylomeDB" id="B4JWR9"/>
<dbReference type="Proteomes" id="UP000001070">
    <property type="component" value="Unassembled WGS sequence"/>
</dbReference>
<dbReference type="GO" id="GO:0005739">
    <property type="term" value="C:mitochondrion"/>
    <property type="evidence" value="ECO:0007669"/>
    <property type="project" value="UniProtKB-SubCell"/>
</dbReference>
<dbReference type="GO" id="GO:0005506">
    <property type="term" value="F:iron ion binding"/>
    <property type="evidence" value="ECO:0007669"/>
    <property type="project" value="InterPro"/>
</dbReference>
<dbReference type="GO" id="GO:0051536">
    <property type="term" value="F:iron-sulfur cluster binding"/>
    <property type="evidence" value="ECO:0007669"/>
    <property type="project" value="UniProtKB-KW"/>
</dbReference>
<dbReference type="GO" id="GO:0016226">
    <property type="term" value="P:iron-sulfur cluster assembly"/>
    <property type="evidence" value="ECO:0007669"/>
    <property type="project" value="InterPro"/>
</dbReference>
<dbReference type="FunFam" id="3.30.300.130:FF:000001">
    <property type="entry name" value="NFU1 iron-sulfur cluster scaffold"/>
    <property type="match status" value="1"/>
</dbReference>
<dbReference type="FunFam" id="3.30.1370.70:FF:000002">
    <property type="entry name" value="NFU1 iron-sulfur cluster scaffold homolog, mitochondrial"/>
    <property type="match status" value="1"/>
</dbReference>
<dbReference type="Gene3D" id="3.30.300.130">
    <property type="entry name" value="Fe-S cluster assembly (FSCA)"/>
    <property type="match status" value="1"/>
</dbReference>
<dbReference type="Gene3D" id="3.30.1370.70">
    <property type="entry name" value="Scaffold protein Nfu/NifU, N-terminal domain"/>
    <property type="match status" value="1"/>
</dbReference>
<dbReference type="InterPro" id="IPR034904">
    <property type="entry name" value="FSCA_dom_sf"/>
</dbReference>
<dbReference type="InterPro" id="IPR014824">
    <property type="entry name" value="Nfu/NifU_N"/>
</dbReference>
<dbReference type="InterPro" id="IPR036498">
    <property type="entry name" value="Nfu/NifU_N_sf"/>
</dbReference>
<dbReference type="InterPro" id="IPR001075">
    <property type="entry name" value="NIF_FeS_clus_asmbl_NifU_C"/>
</dbReference>
<dbReference type="PANTHER" id="PTHR11178">
    <property type="entry name" value="IRON-SULFUR CLUSTER SCAFFOLD PROTEIN NFU-RELATED"/>
    <property type="match status" value="1"/>
</dbReference>
<dbReference type="PANTHER" id="PTHR11178:SF1">
    <property type="entry name" value="NFU1 IRON-SULFUR CLUSTER SCAFFOLD HOMOLOG, MITOCHONDRIAL"/>
    <property type="match status" value="1"/>
</dbReference>
<dbReference type="Pfam" id="PF08712">
    <property type="entry name" value="Nfu_N"/>
    <property type="match status" value="1"/>
</dbReference>
<dbReference type="Pfam" id="PF01106">
    <property type="entry name" value="NifU"/>
    <property type="match status" value="1"/>
</dbReference>
<dbReference type="SMART" id="SM00932">
    <property type="entry name" value="Nfu_N"/>
    <property type="match status" value="1"/>
</dbReference>
<dbReference type="SUPFAM" id="SSF117916">
    <property type="entry name" value="Fe-S cluster assembly (FSCA) domain-like"/>
    <property type="match status" value="1"/>
</dbReference>
<dbReference type="SUPFAM" id="SSF110836">
    <property type="entry name" value="Hypothetical protein SAV1430"/>
    <property type="match status" value="1"/>
</dbReference>